<keyword id="KW-0150">Chloroplast</keyword>
<keyword id="KW-0507">mRNA processing</keyword>
<keyword id="KW-0934">Plastid</keyword>
<keyword id="KW-0694">RNA-binding</keyword>
<keyword id="KW-0819">tRNA processing</keyword>
<comment type="function">
    <text evidence="1">Usually encoded in the trnK tRNA gene intron. Probably assists in splicing its own and other chloroplast group II introns.</text>
</comment>
<comment type="subcellular location">
    <subcellularLocation>
        <location>Plastid</location>
        <location>Chloroplast</location>
    </subcellularLocation>
</comment>
<comment type="similarity">
    <text evidence="1">Belongs to the intron maturase 2 family. MatK subfamily.</text>
</comment>
<proteinExistence type="inferred from homology"/>
<accession>Q5YJU1</accession>
<protein>
    <recommendedName>
        <fullName evidence="1">Maturase K</fullName>
    </recommendedName>
    <alternativeName>
        <fullName evidence="1">Intron maturase</fullName>
    </alternativeName>
</protein>
<reference key="1">
    <citation type="journal article" date="2004" name="Am. J. Bot.">
        <title>A phylogeny of legumes (Leguminosae) based on analysis of the plastid matK gene resolves many well-supported subclades within the family.</title>
        <authorList>
            <person name="Wojciechowski M.F."/>
            <person name="Lavin M."/>
            <person name="Sanderson M.J."/>
        </authorList>
        <dbReference type="AGRICOLA" id="IND43661289"/>
    </citation>
    <scope>NUCLEOTIDE SEQUENCE [GENOMIC DNA]</scope>
</reference>
<reference key="2">
    <citation type="journal article" date="2010" name="Am. J. Bot.">
        <title>Phylogeny and character evolution in Medicago (Leguminosae): evidence from analyses of plastid trnK/matK and nuclear GA3ox1 sequences.</title>
        <authorList>
            <person name="Steele K.P."/>
            <person name="Ickert-Bond S.M."/>
            <person name="Zarre S."/>
            <person name="Wojciechowski M.F."/>
        </authorList>
    </citation>
    <scope>SEQUENCE REVISION TO 192 AND 196</scope>
</reference>
<sequence>MKEYQVYLERSRSRQQDFLYPLLFREYIYGLAYSHHFHRSIFLENVGYDNKYSLLIVKRLITRMYQQNHLIISANDSPKNPFWGYNKNLDCQIISEGFAIVVEIPFFRQLSSSFEEAEILKSFKNLRSIHSIFPFLEDKFTYLNYVSDIRIPYPIHLEILVQILRYWVKDAPFFHLLRLFLYHFCNWNSFISTKKWISTFSKSNPRLFLFLHNFYVCEYEYILVFLRNKSSHLGFKSFSIFFERIFFYGKREHLGKVFAKDFSYPLTFFKDPNIHYVRYQGKCILASKNAPFLMNKWKHYFIHLWQCFFDVWSQPRMININPLSEHSFQLLGYFSNVRLNRSVVRSQMLQNTFLIEIVIKKLDIIVPIIPLIRSLAKAKFCNVLGEPISKPVWADSSDFDIIDRFLRICRNLSHYYNGSSKKKSLYRIKYILRLSCIKTLACKHKSTVRAFLKRSGSEELLQEFFTEEEEIISLIFPRDSSTLQRLHRNRIWYLDILFSNDLVHDE</sequence>
<gene>
    <name evidence="1" type="primary">matK</name>
</gene>
<evidence type="ECO:0000255" key="1">
    <source>
        <dbReference type="HAMAP-Rule" id="MF_01390"/>
    </source>
</evidence>
<dbReference type="EMBL" id="AY386961">
    <property type="protein sequence ID" value="AAQ92039.2"/>
    <property type="molecule type" value="Genomic_DNA"/>
</dbReference>
<dbReference type="GO" id="GO:0009507">
    <property type="term" value="C:chloroplast"/>
    <property type="evidence" value="ECO:0007669"/>
    <property type="project" value="UniProtKB-SubCell"/>
</dbReference>
<dbReference type="GO" id="GO:0003723">
    <property type="term" value="F:RNA binding"/>
    <property type="evidence" value="ECO:0007669"/>
    <property type="project" value="UniProtKB-KW"/>
</dbReference>
<dbReference type="GO" id="GO:0006397">
    <property type="term" value="P:mRNA processing"/>
    <property type="evidence" value="ECO:0007669"/>
    <property type="project" value="UniProtKB-KW"/>
</dbReference>
<dbReference type="GO" id="GO:0008380">
    <property type="term" value="P:RNA splicing"/>
    <property type="evidence" value="ECO:0007669"/>
    <property type="project" value="UniProtKB-UniRule"/>
</dbReference>
<dbReference type="GO" id="GO:0008033">
    <property type="term" value="P:tRNA processing"/>
    <property type="evidence" value="ECO:0007669"/>
    <property type="project" value="UniProtKB-KW"/>
</dbReference>
<dbReference type="HAMAP" id="MF_01390">
    <property type="entry name" value="MatK"/>
    <property type="match status" value="1"/>
</dbReference>
<dbReference type="InterPro" id="IPR024937">
    <property type="entry name" value="Domain_X"/>
</dbReference>
<dbReference type="InterPro" id="IPR002866">
    <property type="entry name" value="Maturase_MatK"/>
</dbReference>
<dbReference type="InterPro" id="IPR024942">
    <property type="entry name" value="Maturase_MatK_N"/>
</dbReference>
<dbReference type="PANTHER" id="PTHR34811">
    <property type="entry name" value="MATURASE K"/>
    <property type="match status" value="1"/>
</dbReference>
<dbReference type="PANTHER" id="PTHR34811:SF1">
    <property type="entry name" value="MATURASE K"/>
    <property type="match status" value="1"/>
</dbReference>
<dbReference type="Pfam" id="PF01348">
    <property type="entry name" value="Intron_maturas2"/>
    <property type="match status" value="1"/>
</dbReference>
<dbReference type="Pfam" id="PF01824">
    <property type="entry name" value="MatK_N"/>
    <property type="match status" value="1"/>
</dbReference>
<geneLocation type="chloroplast"/>
<organism>
    <name type="scientific">Pisum sativum</name>
    <name type="common">Garden pea</name>
    <name type="synonym">Lathyrus oleraceus</name>
    <dbReference type="NCBI Taxonomy" id="3888"/>
    <lineage>
        <taxon>Eukaryota</taxon>
        <taxon>Viridiplantae</taxon>
        <taxon>Streptophyta</taxon>
        <taxon>Embryophyta</taxon>
        <taxon>Tracheophyta</taxon>
        <taxon>Spermatophyta</taxon>
        <taxon>Magnoliopsida</taxon>
        <taxon>eudicotyledons</taxon>
        <taxon>Gunneridae</taxon>
        <taxon>Pentapetalae</taxon>
        <taxon>rosids</taxon>
        <taxon>fabids</taxon>
        <taxon>Fabales</taxon>
        <taxon>Fabaceae</taxon>
        <taxon>Papilionoideae</taxon>
        <taxon>50 kb inversion clade</taxon>
        <taxon>NPAAA clade</taxon>
        <taxon>Hologalegina</taxon>
        <taxon>IRL clade</taxon>
        <taxon>Fabeae</taxon>
        <taxon>Pisum</taxon>
    </lineage>
</organism>
<name>MATK_PEA</name>
<feature type="chain" id="PRO_0000143640" description="Maturase K">
    <location>
        <begin position="1"/>
        <end position="506"/>
    </location>
</feature>